<gene>
    <name evidence="1" type="primary">rdgC</name>
    <name type="ordered locus">SO_1556</name>
</gene>
<organism>
    <name type="scientific">Shewanella oneidensis (strain ATCC 700550 / JCM 31522 / CIP 106686 / LMG 19005 / NCIMB 14063 / MR-1)</name>
    <dbReference type="NCBI Taxonomy" id="211586"/>
    <lineage>
        <taxon>Bacteria</taxon>
        <taxon>Pseudomonadati</taxon>
        <taxon>Pseudomonadota</taxon>
        <taxon>Gammaproteobacteria</taxon>
        <taxon>Alteromonadales</taxon>
        <taxon>Shewanellaceae</taxon>
        <taxon>Shewanella</taxon>
    </lineage>
</organism>
<dbReference type="EMBL" id="AE014299">
    <property type="protein sequence ID" value="AAN54613.1"/>
    <property type="molecule type" value="Genomic_DNA"/>
</dbReference>
<dbReference type="RefSeq" id="NP_717169.1">
    <property type="nucleotide sequence ID" value="NC_004347.2"/>
</dbReference>
<dbReference type="RefSeq" id="WP_011071725.1">
    <property type="nucleotide sequence ID" value="NC_004347.2"/>
</dbReference>
<dbReference type="SMR" id="Q8EGP3"/>
<dbReference type="STRING" id="211586.SO_1556"/>
<dbReference type="PaxDb" id="211586-SO_1556"/>
<dbReference type="KEGG" id="son:SO_1556"/>
<dbReference type="PATRIC" id="fig|211586.12.peg.1500"/>
<dbReference type="eggNOG" id="COG2974">
    <property type="taxonomic scope" value="Bacteria"/>
</dbReference>
<dbReference type="HOGENOM" id="CLU_052038_1_1_6"/>
<dbReference type="OrthoDB" id="5290530at2"/>
<dbReference type="PhylomeDB" id="Q8EGP3"/>
<dbReference type="BioCyc" id="SONE211586:G1GMP-1434-MONOMER"/>
<dbReference type="Proteomes" id="UP000008186">
    <property type="component" value="Chromosome"/>
</dbReference>
<dbReference type="GO" id="GO:0043590">
    <property type="term" value="C:bacterial nucleoid"/>
    <property type="evidence" value="ECO:0000318"/>
    <property type="project" value="GO_Central"/>
</dbReference>
<dbReference type="GO" id="GO:0005737">
    <property type="term" value="C:cytoplasm"/>
    <property type="evidence" value="ECO:0007669"/>
    <property type="project" value="UniProtKB-UniRule"/>
</dbReference>
<dbReference type="GO" id="GO:0003690">
    <property type="term" value="F:double-stranded DNA binding"/>
    <property type="evidence" value="ECO:0000318"/>
    <property type="project" value="GO_Central"/>
</dbReference>
<dbReference type="GO" id="GO:0006310">
    <property type="term" value="P:DNA recombination"/>
    <property type="evidence" value="ECO:0007669"/>
    <property type="project" value="UniProtKB-UniRule"/>
</dbReference>
<dbReference type="GO" id="GO:0000018">
    <property type="term" value="P:regulation of DNA recombination"/>
    <property type="evidence" value="ECO:0000318"/>
    <property type="project" value="GO_Central"/>
</dbReference>
<dbReference type="HAMAP" id="MF_00194">
    <property type="entry name" value="RdgC"/>
    <property type="match status" value="1"/>
</dbReference>
<dbReference type="InterPro" id="IPR007476">
    <property type="entry name" value="RdgC"/>
</dbReference>
<dbReference type="NCBIfam" id="NF001462">
    <property type="entry name" value="PRK00321.1-3"/>
    <property type="match status" value="1"/>
</dbReference>
<dbReference type="NCBIfam" id="NF001464">
    <property type="entry name" value="PRK00321.1-5"/>
    <property type="match status" value="1"/>
</dbReference>
<dbReference type="PANTHER" id="PTHR38103">
    <property type="entry name" value="RECOMBINATION-ASSOCIATED PROTEIN RDGC"/>
    <property type="match status" value="1"/>
</dbReference>
<dbReference type="PANTHER" id="PTHR38103:SF1">
    <property type="entry name" value="RECOMBINATION-ASSOCIATED PROTEIN RDGC"/>
    <property type="match status" value="1"/>
</dbReference>
<dbReference type="Pfam" id="PF04381">
    <property type="entry name" value="RdgC"/>
    <property type="match status" value="1"/>
</dbReference>
<keyword id="KW-0963">Cytoplasm</keyword>
<keyword id="KW-0233">DNA recombination</keyword>
<keyword id="KW-1185">Reference proteome</keyword>
<reference key="1">
    <citation type="journal article" date="2002" name="Nat. Biotechnol.">
        <title>Genome sequence of the dissimilatory metal ion-reducing bacterium Shewanella oneidensis.</title>
        <authorList>
            <person name="Heidelberg J.F."/>
            <person name="Paulsen I.T."/>
            <person name="Nelson K.E."/>
            <person name="Gaidos E.J."/>
            <person name="Nelson W.C."/>
            <person name="Read T.D."/>
            <person name="Eisen J.A."/>
            <person name="Seshadri R."/>
            <person name="Ward N.L."/>
            <person name="Methe B.A."/>
            <person name="Clayton R.A."/>
            <person name="Meyer T."/>
            <person name="Tsapin A."/>
            <person name="Scott J."/>
            <person name="Beanan M.J."/>
            <person name="Brinkac L.M."/>
            <person name="Daugherty S.C."/>
            <person name="DeBoy R.T."/>
            <person name="Dodson R.J."/>
            <person name="Durkin A.S."/>
            <person name="Haft D.H."/>
            <person name="Kolonay J.F."/>
            <person name="Madupu R."/>
            <person name="Peterson J.D."/>
            <person name="Umayam L.A."/>
            <person name="White O."/>
            <person name="Wolf A.M."/>
            <person name="Vamathevan J.J."/>
            <person name="Weidman J.F."/>
            <person name="Impraim M."/>
            <person name="Lee K."/>
            <person name="Berry K.J."/>
            <person name="Lee C."/>
            <person name="Mueller J."/>
            <person name="Khouri H.M."/>
            <person name="Gill J."/>
            <person name="Utterback T.R."/>
            <person name="McDonald L.A."/>
            <person name="Feldblyum T.V."/>
            <person name="Smith H.O."/>
            <person name="Venter J.C."/>
            <person name="Nealson K.H."/>
            <person name="Fraser C.M."/>
        </authorList>
    </citation>
    <scope>NUCLEOTIDE SEQUENCE [LARGE SCALE GENOMIC DNA]</scope>
    <source>
        <strain>ATCC 700550 / JCM 31522 / CIP 106686 / LMG 19005 / NCIMB 14063 / MR-1</strain>
    </source>
</reference>
<protein>
    <recommendedName>
        <fullName evidence="1">Recombination-associated protein RdgC</fullName>
    </recommendedName>
</protein>
<name>RDGC_SHEON</name>
<evidence type="ECO:0000255" key="1">
    <source>
        <dbReference type="HAMAP-Rule" id="MF_00194"/>
    </source>
</evidence>
<feature type="chain" id="PRO_0000211751" description="Recombination-associated protein RdgC">
    <location>
        <begin position="1"/>
        <end position="304"/>
    </location>
</feature>
<proteinExistence type="inferred from homology"/>
<sequence>MWFKNLTLYRFNKPFSIETEALETALADFTFSPCGSQDVSKFGFSNALGKKGSTLVHSANNRHLICVTKEEKILPAQVIKESLEEKVAQIEDEENRKLAKKEKDALKDEIITSLLPRAFSRRSQTRALILPELEMILVDSSSATKAEELLALLRKALGSLPVIPLSFKAPIESQLTEWLKNGSAPLPFEMQDEAELKSAADEGGIVRFKQQDLKEDEVLAHLETGKEVHKLALHFGQSIALLLQSDASVKRLKFSEEFRAGNDELGNEDPMARLDADFALMGSELVALMHALVSALGGIEETQA</sequence>
<accession>Q8EGP3</accession>
<comment type="function">
    <text evidence="1">May be involved in recombination.</text>
</comment>
<comment type="subcellular location">
    <subcellularLocation>
        <location evidence="1">Cytoplasm</location>
        <location evidence="1">Nucleoid</location>
    </subcellularLocation>
</comment>
<comment type="similarity">
    <text evidence="1">Belongs to the RdgC family.</text>
</comment>